<keyword id="KW-0963">Cytoplasm</keyword>
<keyword id="KW-0489">Methyltransferase</keyword>
<keyword id="KW-0949">S-adenosyl-L-methionine</keyword>
<keyword id="KW-0808">Transferase</keyword>
<keyword id="KW-0819">tRNA processing</keyword>
<reference key="1">
    <citation type="journal article" date="2006" name="Proc. Natl. Acad. Sci. U.S.A.">
        <title>Identification of genes subject to positive selection in uropathogenic strains of Escherichia coli: a comparative genomics approach.</title>
        <authorList>
            <person name="Chen S.L."/>
            <person name="Hung C.-S."/>
            <person name="Xu J."/>
            <person name="Reigstad C.S."/>
            <person name="Magrini V."/>
            <person name="Sabo A."/>
            <person name="Blasiar D."/>
            <person name="Bieri T."/>
            <person name="Meyer R.R."/>
            <person name="Ozersky P."/>
            <person name="Armstrong J.R."/>
            <person name="Fulton R.S."/>
            <person name="Latreille J.P."/>
            <person name="Spieth J."/>
            <person name="Hooton T.M."/>
            <person name="Mardis E.R."/>
            <person name="Hultgren S.J."/>
            <person name="Gordon J.I."/>
        </authorList>
    </citation>
    <scope>NUCLEOTIDE SEQUENCE [LARGE SCALE GENOMIC DNA]</scope>
    <source>
        <strain>UTI89 / UPEC</strain>
    </source>
</reference>
<name>TRMN6_ECOUT</name>
<sequence length="245" mass="27273">MSQSTSVFRRNGFTFKQFFVAHDRCAMKVGTDGILLGAWAPVAGVKRCLDIGAGSGLLALMLAQRTDDSVMIDAVELESEAAAQAQENINQSPWAERINVHTADILQWITQQTVRFDLIISNPPYYQQGVECATPQREQARYTTTLDHPSLLTCAAECITEEGFFCVVLPEQIGNGFTELALSMGWHLRLRTDVAENEARLPHRVLLAFSPQAGECFSDRLVIRGPDQNYSEAYTALTQAFYLFM</sequence>
<protein>
    <recommendedName>
        <fullName evidence="1">tRNA1(Val) (adenine(37)-N6)-methyltransferase</fullName>
        <ecNumber evidence="1">2.1.1.223</ecNumber>
    </recommendedName>
    <alternativeName>
        <fullName evidence="1">tRNA m6A37 methyltransferase</fullName>
    </alternativeName>
</protein>
<comment type="function">
    <text evidence="1">Specifically methylates the adenine in position 37 of tRNA(1)(Val) (anticodon cmo5UAC).</text>
</comment>
<comment type="catalytic activity">
    <reaction evidence="1">
        <text>adenosine(37) in tRNA1(Val) + S-adenosyl-L-methionine = N(6)-methyladenosine(37) in tRNA1(Val) + S-adenosyl-L-homocysteine + H(+)</text>
        <dbReference type="Rhea" id="RHEA:43160"/>
        <dbReference type="Rhea" id="RHEA-COMP:10369"/>
        <dbReference type="Rhea" id="RHEA-COMP:10370"/>
        <dbReference type="ChEBI" id="CHEBI:15378"/>
        <dbReference type="ChEBI" id="CHEBI:57856"/>
        <dbReference type="ChEBI" id="CHEBI:59789"/>
        <dbReference type="ChEBI" id="CHEBI:74411"/>
        <dbReference type="ChEBI" id="CHEBI:74449"/>
        <dbReference type="EC" id="2.1.1.223"/>
    </reaction>
</comment>
<comment type="subcellular location">
    <subcellularLocation>
        <location evidence="1">Cytoplasm</location>
    </subcellularLocation>
</comment>
<comment type="similarity">
    <text evidence="1">Belongs to the methyltransferase superfamily. tRNA (adenine-N(6)-)-methyltransferase family.</text>
</comment>
<comment type="sequence caution" evidence="2">
    <conflict type="erroneous initiation">
        <sequence resource="EMBL-CDS" id="ABE08357"/>
    </conflict>
</comment>
<feature type="chain" id="PRO_0000387363" description="tRNA1(Val) (adenine(37)-N6)-methyltransferase">
    <location>
        <begin position="1"/>
        <end position="245"/>
    </location>
</feature>
<evidence type="ECO:0000255" key="1">
    <source>
        <dbReference type="HAMAP-Rule" id="MF_01872"/>
    </source>
</evidence>
<evidence type="ECO:0000305" key="2"/>
<organism>
    <name type="scientific">Escherichia coli (strain UTI89 / UPEC)</name>
    <dbReference type="NCBI Taxonomy" id="364106"/>
    <lineage>
        <taxon>Bacteria</taxon>
        <taxon>Pseudomonadati</taxon>
        <taxon>Pseudomonadota</taxon>
        <taxon>Gammaproteobacteria</taxon>
        <taxon>Enterobacterales</taxon>
        <taxon>Enterobacteriaceae</taxon>
        <taxon>Escherichia</taxon>
    </lineage>
</organism>
<gene>
    <name evidence="1" type="primary">yfiC</name>
    <name type="ordered locus">UTI89_C2897</name>
</gene>
<dbReference type="EC" id="2.1.1.223" evidence="1"/>
<dbReference type="EMBL" id="CP000243">
    <property type="protein sequence ID" value="ABE08357.1"/>
    <property type="status" value="ALT_INIT"/>
    <property type="molecule type" value="Genomic_DNA"/>
</dbReference>
<dbReference type="SMR" id="Q1R8F7"/>
<dbReference type="KEGG" id="eci:UTI89_C2897"/>
<dbReference type="HOGENOM" id="CLU_061983_0_0_6"/>
<dbReference type="Proteomes" id="UP000001952">
    <property type="component" value="Chromosome"/>
</dbReference>
<dbReference type="GO" id="GO:0005737">
    <property type="term" value="C:cytoplasm"/>
    <property type="evidence" value="ECO:0007669"/>
    <property type="project" value="UniProtKB-SubCell"/>
</dbReference>
<dbReference type="GO" id="GO:0003676">
    <property type="term" value="F:nucleic acid binding"/>
    <property type="evidence" value="ECO:0007669"/>
    <property type="project" value="InterPro"/>
</dbReference>
<dbReference type="GO" id="GO:0016430">
    <property type="term" value="F:tRNA (adenine-N6)-methyltransferase activity"/>
    <property type="evidence" value="ECO:0007669"/>
    <property type="project" value="UniProtKB-UniRule"/>
</dbReference>
<dbReference type="GO" id="GO:0032259">
    <property type="term" value="P:methylation"/>
    <property type="evidence" value="ECO:0007669"/>
    <property type="project" value="UniProtKB-KW"/>
</dbReference>
<dbReference type="GO" id="GO:0008033">
    <property type="term" value="P:tRNA processing"/>
    <property type="evidence" value="ECO:0007669"/>
    <property type="project" value="UniProtKB-UniRule"/>
</dbReference>
<dbReference type="CDD" id="cd02440">
    <property type="entry name" value="AdoMet_MTases"/>
    <property type="match status" value="1"/>
</dbReference>
<dbReference type="FunFam" id="3.40.50.150:FF:000087">
    <property type="entry name" value="tRNA1(Val) (adenine(37)-N6)-methyltransferase"/>
    <property type="match status" value="1"/>
</dbReference>
<dbReference type="Gene3D" id="3.40.50.150">
    <property type="entry name" value="Vaccinia Virus protein VP39"/>
    <property type="match status" value="1"/>
</dbReference>
<dbReference type="HAMAP" id="MF_01872">
    <property type="entry name" value="tRNA_methyltr_YfiC"/>
    <property type="match status" value="1"/>
</dbReference>
<dbReference type="InterPro" id="IPR002052">
    <property type="entry name" value="DNA_methylase_N6_adenine_CS"/>
</dbReference>
<dbReference type="InterPro" id="IPR029063">
    <property type="entry name" value="SAM-dependent_MTases_sf"/>
</dbReference>
<dbReference type="InterPro" id="IPR007848">
    <property type="entry name" value="Small_mtfrase_dom"/>
</dbReference>
<dbReference type="InterPro" id="IPR050210">
    <property type="entry name" value="tRNA_Adenine-N(6)_MTase"/>
</dbReference>
<dbReference type="InterPro" id="IPR022882">
    <property type="entry name" value="tRNA_adenine-N6_MeTrfase"/>
</dbReference>
<dbReference type="NCBIfam" id="NF047853">
    <property type="entry name" value="tRm6a37MtseTrmN"/>
    <property type="match status" value="1"/>
</dbReference>
<dbReference type="PANTHER" id="PTHR47739">
    <property type="entry name" value="TRNA1(VAL) (ADENINE(37)-N6)-METHYLTRANSFERASE"/>
    <property type="match status" value="1"/>
</dbReference>
<dbReference type="PANTHER" id="PTHR47739:SF1">
    <property type="entry name" value="TRNA1(VAL) (ADENINE(37)-N6)-METHYLTRANSFERASE"/>
    <property type="match status" value="1"/>
</dbReference>
<dbReference type="Pfam" id="PF05175">
    <property type="entry name" value="MTS"/>
    <property type="match status" value="1"/>
</dbReference>
<dbReference type="SUPFAM" id="SSF53335">
    <property type="entry name" value="S-adenosyl-L-methionine-dependent methyltransferases"/>
    <property type="match status" value="1"/>
</dbReference>
<dbReference type="PROSITE" id="PS00092">
    <property type="entry name" value="N6_MTASE"/>
    <property type="match status" value="1"/>
</dbReference>
<accession>Q1R8F7</accession>
<proteinExistence type="inferred from homology"/>